<gene>
    <name evidence="1" type="primary">rnhB</name>
    <name type="ordered locus">blr2521</name>
</gene>
<proteinExistence type="inferred from homology"/>
<protein>
    <recommendedName>
        <fullName evidence="1">Ribonuclease HII</fullName>
        <shortName evidence="1">RNase HII</shortName>
        <ecNumber evidence="1">3.1.26.4</ecNumber>
    </recommendedName>
</protein>
<organism>
    <name type="scientific">Bradyrhizobium diazoefficiens (strain JCM 10833 / BCRC 13528 / IAM 13628 / NBRC 14792 / USDA 110)</name>
    <dbReference type="NCBI Taxonomy" id="224911"/>
    <lineage>
        <taxon>Bacteria</taxon>
        <taxon>Pseudomonadati</taxon>
        <taxon>Pseudomonadota</taxon>
        <taxon>Alphaproteobacteria</taxon>
        <taxon>Hyphomicrobiales</taxon>
        <taxon>Nitrobacteraceae</taxon>
        <taxon>Bradyrhizobium</taxon>
    </lineage>
</organism>
<dbReference type="EC" id="3.1.26.4" evidence="1"/>
<dbReference type="EMBL" id="BA000040">
    <property type="protein sequence ID" value="BAC47786.1"/>
    <property type="molecule type" value="Genomic_DNA"/>
</dbReference>
<dbReference type="RefSeq" id="NP_769161.1">
    <property type="nucleotide sequence ID" value="NC_004463.1"/>
</dbReference>
<dbReference type="RefSeq" id="WP_011085308.1">
    <property type="nucleotide sequence ID" value="NC_004463.1"/>
</dbReference>
<dbReference type="SMR" id="Q89S84"/>
<dbReference type="FunCoup" id="Q89S84">
    <property type="interactions" value="411"/>
</dbReference>
<dbReference type="STRING" id="224911.AAV28_09540"/>
<dbReference type="EnsemblBacteria" id="BAC47786">
    <property type="protein sequence ID" value="BAC47786"/>
    <property type="gene ID" value="BAC47786"/>
</dbReference>
<dbReference type="GeneID" id="46489562"/>
<dbReference type="KEGG" id="bja:blr2521"/>
<dbReference type="PATRIC" id="fig|224911.44.peg.2097"/>
<dbReference type="eggNOG" id="COG0164">
    <property type="taxonomic scope" value="Bacteria"/>
</dbReference>
<dbReference type="HOGENOM" id="CLU_036532_2_2_5"/>
<dbReference type="InParanoid" id="Q89S84"/>
<dbReference type="OrthoDB" id="9803420at2"/>
<dbReference type="PhylomeDB" id="Q89S84"/>
<dbReference type="Proteomes" id="UP000002526">
    <property type="component" value="Chromosome"/>
</dbReference>
<dbReference type="GO" id="GO:0005737">
    <property type="term" value="C:cytoplasm"/>
    <property type="evidence" value="ECO:0007669"/>
    <property type="project" value="UniProtKB-SubCell"/>
</dbReference>
<dbReference type="GO" id="GO:0032299">
    <property type="term" value="C:ribonuclease H2 complex"/>
    <property type="evidence" value="ECO:0000318"/>
    <property type="project" value="GO_Central"/>
</dbReference>
<dbReference type="GO" id="GO:0030145">
    <property type="term" value="F:manganese ion binding"/>
    <property type="evidence" value="ECO:0007669"/>
    <property type="project" value="UniProtKB-UniRule"/>
</dbReference>
<dbReference type="GO" id="GO:0003723">
    <property type="term" value="F:RNA binding"/>
    <property type="evidence" value="ECO:0007669"/>
    <property type="project" value="InterPro"/>
</dbReference>
<dbReference type="GO" id="GO:0004523">
    <property type="term" value="F:RNA-DNA hybrid ribonuclease activity"/>
    <property type="evidence" value="ECO:0000318"/>
    <property type="project" value="GO_Central"/>
</dbReference>
<dbReference type="GO" id="GO:0043137">
    <property type="term" value="P:DNA replication, removal of RNA primer"/>
    <property type="evidence" value="ECO:0000318"/>
    <property type="project" value="GO_Central"/>
</dbReference>
<dbReference type="GO" id="GO:0006298">
    <property type="term" value="P:mismatch repair"/>
    <property type="evidence" value="ECO:0000318"/>
    <property type="project" value="GO_Central"/>
</dbReference>
<dbReference type="CDD" id="cd07182">
    <property type="entry name" value="RNase_HII_bacteria_HII_like"/>
    <property type="match status" value="1"/>
</dbReference>
<dbReference type="FunFam" id="3.30.420.10:FF:000078">
    <property type="entry name" value="Ribonuclease HII"/>
    <property type="match status" value="1"/>
</dbReference>
<dbReference type="Gene3D" id="3.30.420.10">
    <property type="entry name" value="Ribonuclease H-like superfamily/Ribonuclease H"/>
    <property type="match status" value="1"/>
</dbReference>
<dbReference type="HAMAP" id="MF_00052_B">
    <property type="entry name" value="RNase_HII_B"/>
    <property type="match status" value="1"/>
</dbReference>
<dbReference type="InterPro" id="IPR022898">
    <property type="entry name" value="RNase_HII"/>
</dbReference>
<dbReference type="InterPro" id="IPR001352">
    <property type="entry name" value="RNase_HII/HIII"/>
</dbReference>
<dbReference type="InterPro" id="IPR024567">
    <property type="entry name" value="RNase_HII/HIII_dom"/>
</dbReference>
<dbReference type="InterPro" id="IPR012337">
    <property type="entry name" value="RNaseH-like_sf"/>
</dbReference>
<dbReference type="InterPro" id="IPR036397">
    <property type="entry name" value="RNaseH_sf"/>
</dbReference>
<dbReference type="NCBIfam" id="NF000595">
    <property type="entry name" value="PRK00015.1-3"/>
    <property type="match status" value="1"/>
</dbReference>
<dbReference type="PANTHER" id="PTHR10954">
    <property type="entry name" value="RIBONUCLEASE H2 SUBUNIT A"/>
    <property type="match status" value="1"/>
</dbReference>
<dbReference type="PANTHER" id="PTHR10954:SF18">
    <property type="entry name" value="RIBONUCLEASE HII"/>
    <property type="match status" value="1"/>
</dbReference>
<dbReference type="Pfam" id="PF01351">
    <property type="entry name" value="RNase_HII"/>
    <property type="match status" value="1"/>
</dbReference>
<dbReference type="SUPFAM" id="SSF53098">
    <property type="entry name" value="Ribonuclease H-like"/>
    <property type="match status" value="1"/>
</dbReference>
<dbReference type="PROSITE" id="PS51975">
    <property type="entry name" value="RNASE_H_2"/>
    <property type="match status" value="1"/>
</dbReference>
<name>RNH2_BRADU</name>
<reference key="1">
    <citation type="journal article" date="2002" name="DNA Res.">
        <title>Complete genomic sequence of nitrogen-fixing symbiotic bacterium Bradyrhizobium japonicum USDA110.</title>
        <authorList>
            <person name="Kaneko T."/>
            <person name="Nakamura Y."/>
            <person name="Sato S."/>
            <person name="Minamisawa K."/>
            <person name="Uchiumi T."/>
            <person name="Sasamoto S."/>
            <person name="Watanabe A."/>
            <person name="Idesawa K."/>
            <person name="Iriguchi M."/>
            <person name="Kawashima K."/>
            <person name="Kohara M."/>
            <person name="Matsumoto M."/>
            <person name="Shimpo S."/>
            <person name="Tsuruoka H."/>
            <person name="Wada T."/>
            <person name="Yamada M."/>
            <person name="Tabata S."/>
        </authorList>
    </citation>
    <scope>NUCLEOTIDE SEQUENCE [LARGE SCALE GENOMIC DNA]</scope>
    <source>
        <strain>JCM 10833 / BCRC 13528 / IAM 13628 / NBRC 14792 / USDA 110</strain>
    </source>
</reference>
<sequence>MIRDKSAKRPAKDAPKKAAVKEAAPVKASFRRERALIKRGIWPVAGCDEAGRGPLAGPVVAAAVILDPDRIPRGIDDSKRLTAEQREKLFDKICATAQVSVAVASPARIDRDNILRASLWALKRAVVALPEAPRHVFVDGRDRLDTACDCEAVIGGDGIVLSIAAASIVAKVTRDRLMCALAQDCPGYGFEQHKGYGVPEHLDALNRLGPTVHHRSFFAPVAAARAKHMPWTVEPVRDLFAATEVEVQLEASVEIDASANL</sequence>
<feature type="chain" id="PRO_0000111549" description="Ribonuclease HII">
    <location>
        <begin position="1"/>
        <end position="261"/>
    </location>
</feature>
<feature type="domain" description="RNase H type-2" evidence="2">
    <location>
        <begin position="42"/>
        <end position="230"/>
    </location>
</feature>
<feature type="region of interest" description="Disordered" evidence="3">
    <location>
        <begin position="1"/>
        <end position="23"/>
    </location>
</feature>
<feature type="compositionally biased region" description="Basic and acidic residues" evidence="3">
    <location>
        <begin position="1"/>
        <end position="20"/>
    </location>
</feature>
<feature type="binding site" evidence="1">
    <location>
        <position position="48"/>
    </location>
    <ligand>
        <name>a divalent metal cation</name>
        <dbReference type="ChEBI" id="CHEBI:60240"/>
    </ligand>
</feature>
<feature type="binding site" evidence="1">
    <location>
        <position position="49"/>
    </location>
    <ligand>
        <name>a divalent metal cation</name>
        <dbReference type="ChEBI" id="CHEBI:60240"/>
    </ligand>
</feature>
<feature type="binding site" evidence="1">
    <location>
        <position position="139"/>
    </location>
    <ligand>
        <name>a divalent metal cation</name>
        <dbReference type="ChEBI" id="CHEBI:60240"/>
    </ligand>
</feature>
<evidence type="ECO:0000255" key="1">
    <source>
        <dbReference type="HAMAP-Rule" id="MF_00052"/>
    </source>
</evidence>
<evidence type="ECO:0000255" key="2">
    <source>
        <dbReference type="PROSITE-ProRule" id="PRU01319"/>
    </source>
</evidence>
<evidence type="ECO:0000256" key="3">
    <source>
        <dbReference type="SAM" id="MobiDB-lite"/>
    </source>
</evidence>
<keyword id="KW-0963">Cytoplasm</keyword>
<keyword id="KW-0255">Endonuclease</keyword>
<keyword id="KW-0378">Hydrolase</keyword>
<keyword id="KW-0464">Manganese</keyword>
<keyword id="KW-0479">Metal-binding</keyword>
<keyword id="KW-0540">Nuclease</keyword>
<keyword id="KW-1185">Reference proteome</keyword>
<accession>Q89S84</accession>
<comment type="function">
    <text evidence="1">Endonuclease that specifically degrades the RNA of RNA-DNA hybrids.</text>
</comment>
<comment type="catalytic activity">
    <reaction evidence="1">
        <text>Endonucleolytic cleavage to 5'-phosphomonoester.</text>
        <dbReference type="EC" id="3.1.26.4"/>
    </reaction>
</comment>
<comment type="cofactor">
    <cofactor evidence="1">
        <name>Mn(2+)</name>
        <dbReference type="ChEBI" id="CHEBI:29035"/>
    </cofactor>
    <cofactor evidence="1">
        <name>Mg(2+)</name>
        <dbReference type="ChEBI" id="CHEBI:18420"/>
    </cofactor>
    <text evidence="1">Manganese or magnesium. Binds 1 divalent metal ion per monomer in the absence of substrate. May bind a second metal ion after substrate binding.</text>
</comment>
<comment type="subcellular location">
    <subcellularLocation>
        <location evidence="1">Cytoplasm</location>
    </subcellularLocation>
</comment>
<comment type="similarity">
    <text evidence="1">Belongs to the RNase HII family.</text>
</comment>